<name>PTELO_BPPY5</name>
<dbReference type="EC" id="3.1.22.-" evidence="4"/>
<dbReference type="EMBL" id="AJ348844">
    <property type="protein sequence ID" value="CAC88681.1"/>
    <property type="molecule type" value="Genomic_DNA"/>
</dbReference>
<dbReference type="SMR" id="Q8W5V1"/>
<dbReference type="GO" id="GO:0003677">
    <property type="term" value="F:DNA binding"/>
    <property type="evidence" value="ECO:0007669"/>
    <property type="project" value="UniProtKB-KW"/>
</dbReference>
<dbReference type="GO" id="GO:0004519">
    <property type="term" value="F:endonuclease activity"/>
    <property type="evidence" value="ECO:0007669"/>
    <property type="project" value="UniProtKB-KW"/>
</dbReference>
<dbReference type="GO" id="GO:0006260">
    <property type="term" value="P:DNA replication"/>
    <property type="evidence" value="ECO:0007669"/>
    <property type="project" value="UniProtKB-KW"/>
</dbReference>
<dbReference type="GO" id="GO:0039693">
    <property type="term" value="P:viral DNA genome replication"/>
    <property type="evidence" value="ECO:0007669"/>
    <property type="project" value="UniProtKB-KW"/>
</dbReference>
<dbReference type="Gene3D" id="1.10.10.2040">
    <property type="match status" value="1"/>
</dbReference>
<dbReference type="Gene3D" id="1.10.287.3180">
    <property type="match status" value="1"/>
</dbReference>
<dbReference type="Gene3D" id="1.20.1440.270">
    <property type="match status" value="1"/>
</dbReference>
<dbReference type="Gene3D" id="1.10.443.30">
    <property type="entry name" value="Telomere resolvase"/>
    <property type="match status" value="1"/>
</dbReference>
<dbReference type="InterPro" id="IPR032047">
    <property type="entry name" value="ResT/TelK_cat"/>
</dbReference>
<dbReference type="InterPro" id="IPR038280">
    <property type="entry name" value="ResT/TelK_cat_sf"/>
</dbReference>
<dbReference type="InterPro" id="IPR049460">
    <property type="entry name" value="TelK_muzzle"/>
</dbReference>
<dbReference type="InterPro" id="IPR055040">
    <property type="entry name" value="TelK_N"/>
</dbReference>
<dbReference type="InterPro" id="IPR049454">
    <property type="entry name" value="TelK_stirrup"/>
</dbReference>
<dbReference type="Pfam" id="PF16684">
    <property type="entry name" value="ResT-TelK_cat"/>
    <property type="match status" value="1"/>
</dbReference>
<dbReference type="Pfam" id="PF20849">
    <property type="entry name" value="TelK_muzzle"/>
    <property type="match status" value="1"/>
</dbReference>
<dbReference type="Pfam" id="PF22853">
    <property type="entry name" value="TelK_N"/>
    <property type="match status" value="1"/>
</dbReference>
<dbReference type="Pfam" id="PF20818">
    <property type="entry name" value="TelK_stirrup"/>
    <property type="match status" value="1"/>
</dbReference>
<sequence length="617" mass="70606">MKIHFRDLVSGLVKEIDEIEKSDRAQGDKTRRYQGAARKFKNAVFMDKRKYRGNGMKNRISLTTFNKYLSRARSRFEERLHHSFPQSIATISNKYPAFSEIIKDLDNRPAHEVRIKLKELITHLESGVNLLEKIGSLGKIKPSTAKKIVSLKKMYPSWANDLDTLISTEDATELQQKLEQGTDLLNALHSLKVNHEVMYALTMQPSDRAALKARHDAALHFKKRNIVPIDYPGYMQRMTDILHLPDIAFEDSMASLAPLAFALAAASGRRQIEILITGEFDAKNKSIIKFSGQAKKRMAVSGGHYEIYSLIDSELFIQRLEFLRSHSSILRLQNLEIAHDEHRTELSVINGFVAKPLNDAAKQFFVDDRRVFKDTRAIYARIAYEKWFRTDPRWAKCDEDVFFSELLGHDDPDTQLAYKQFKLVNFNPKWTPNISDENPRLAALQELDNDMPGLARGDAAVRIHEWVKEQLAQNPAAKITAYQIKKNLNCRNDLASRYMAWCADALGVVIGDDGQARPEELPPSLVLDINADDTDAEEDEIEEDFTDEEIDDTEFDVSDNASDEDKPEDKPRFAAPIRRSEDSWLIKFEFAGKQYSWEGNAESVIDAMKQAWTENME</sequence>
<keyword id="KW-0235">DNA replication</keyword>
<keyword id="KW-0238">DNA-binding</keyword>
<keyword id="KW-0255">Endonuclease</keyword>
<keyword id="KW-0378">Hydrolase</keyword>
<keyword id="KW-0540">Nuclease</keyword>
<keyword id="KW-1194">Viral DNA replication</keyword>
<proteinExistence type="evidence at protein level"/>
<protein>
    <recommendedName>
        <fullName evidence="5">Protelomerase</fullName>
        <ecNumber evidence="4">3.1.22.-</ecNumber>
    </recommendedName>
    <alternativeName>
        <fullName evidence="5">Hairpin telomere resolvase</fullName>
    </alternativeName>
    <alternativeName>
        <fullName evidence="5">TelY</fullName>
    </alternativeName>
</protein>
<evidence type="ECO:0000250" key="1">
    <source>
        <dbReference type="UniProtKB" id="Q6UAV6"/>
    </source>
</evidence>
<evidence type="ECO:0000250" key="2">
    <source>
        <dbReference type="UniProtKB" id="Q77WP1"/>
    </source>
</evidence>
<evidence type="ECO:0000256" key="3">
    <source>
        <dbReference type="SAM" id="MobiDB-lite"/>
    </source>
</evidence>
<evidence type="ECO:0000269" key="4">
    <source>
    </source>
</evidence>
<evidence type="ECO:0000305" key="5"/>
<gene>
    <name type="primary">tel</name>
</gene>
<reference key="1">
    <citation type="journal article" date="2003" name="Mol. Microbiol.">
        <title>PY54, a linear plasmid prophage of Yersinia enterocolitica with covalently closed ends.</title>
        <authorList>
            <person name="Hertwig S."/>
            <person name="Klein I."/>
            <person name="Lurz R."/>
            <person name="Lanka E."/>
            <person name="Appel B."/>
        </authorList>
    </citation>
    <scope>NUCLEOTIDE SEQUENCE [GENOMIC DNA]</scope>
    <scope>FUNCTION</scope>
    <scope>CATALYTIC ACTIVITY</scope>
</reference>
<organismHost>
    <name type="scientific">Yersinia enterocolitica</name>
    <dbReference type="NCBI Taxonomy" id="630"/>
</organismHost>
<comment type="function">
    <text evidence="2">Converts the circular intermediates produced by the viral replication and carrying a joined telomere site to a linear DNA molecule with covalently closed hairpin ends. The viral circular DNA is cleaved at a palindromic site called telRL thereby generating a linear prophage plasmid with telomeres. Binds covalently to the 3'-phosphoryl of the cleaved strands.</text>
</comment>
<comment type="subunit">
    <text evidence="1 2">Monomer (By similarity). Homodimer; in presence of DNA (By similarity).</text>
</comment>
<comment type="similarity">
    <text evidence="5">Belongs to the Caudoviricetes Protelomerase family.</text>
</comment>
<accession>Q8W5V1</accession>
<organism>
    <name type="scientific">Yersinia phage PY54</name>
    <name type="common">Bacteriophage PY54</name>
    <dbReference type="NCBI Taxonomy" id="172667"/>
    <lineage>
        <taxon>Viruses</taxon>
        <taxon>Duplodnaviria</taxon>
        <taxon>Heunggongvirae</taxon>
        <taxon>Uroviricota</taxon>
        <taxon>Caudoviricetes</taxon>
    </lineage>
</organism>
<feature type="chain" id="PRO_0000459453" description="Protelomerase">
    <location>
        <begin position="1"/>
        <end position="617"/>
    </location>
</feature>
<feature type="region of interest" description="Disordered" evidence="3">
    <location>
        <begin position="535"/>
        <end position="575"/>
    </location>
</feature>
<feature type="compositionally biased region" description="Acidic residues" evidence="3">
    <location>
        <begin position="535"/>
        <end position="562"/>
    </location>
</feature>
<feature type="compositionally biased region" description="Basic and acidic residues" evidence="3">
    <location>
        <begin position="563"/>
        <end position="575"/>
    </location>
</feature>
<feature type="active site" description="Nucleophile" evidence="1">
    <location>
        <position position="418"/>
    </location>
</feature>
<feature type="binding site" evidence="1">
    <location>
        <position position="270"/>
    </location>
    <ligand>
        <name>DNA</name>
        <dbReference type="ChEBI" id="CHEBI:16991"/>
    </ligand>
</feature>
<feature type="binding site" evidence="1">
    <location>
        <position position="295"/>
    </location>
    <ligand>
        <name>DNA</name>
        <dbReference type="ChEBI" id="CHEBI:16991"/>
    </ligand>
</feature>
<feature type="binding site" evidence="1">
    <location>
        <position position="376"/>
    </location>
    <ligand>
        <name>DNA</name>
        <dbReference type="ChEBI" id="CHEBI:16991"/>
    </ligand>
</feature>
<feature type="binding site" evidence="1">
    <location>
        <position position="409"/>
    </location>
    <ligand>
        <name>DNA</name>
        <dbReference type="ChEBI" id="CHEBI:16991"/>
    </ligand>
</feature>